<feature type="chain" id="PRO_0000211527" description="Cysteine-rich venom protein asurin-1">
    <location>
        <begin position="1"/>
        <end position="46" status="greater than"/>
    </location>
</feature>
<feature type="non-terminal residue" evidence="3">
    <location>
        <position position="46"/>
    </location>
</feature>
<protein>
    <recommendedName>
        <fullName>Cysteine-rich venom protein asurin-1</fullName>
    </recommendedName>
</protein>
<sequence length="46" mass="5367">SNKKDYRKEIVDKHNALRRSVKPTARNMLSMEVNSKAAQNAQRRXD</sequence>
<evidence type="ECO:0000250" key="1"/>
<evidence type="ECO:0000250" key="2">
    <source>
        <dbReference type="UniProtKB" id="P84808"/>
    </source>
</evidence>
<evidence type="ECO:0000305" key="3"/>
<comment type="function">
    <text evidence="1">Blocks contraction of smooth muscle elicited by high potassium-induced depolarization, but does not block caffeine-stimulated contraction. May target voltage-gated calcium channels on smooth muscle (By similarity).</text>
</comment>
<comment type="subcellular location">
    <subcellularLocation>
        <location evidence="3">Secreted</location>
    </subcellularLocation>
</comment>
<comment type="tissue specificity">
    <text evidence="3">Expressed by the venom gland.</text>
</comment>
<comment type="PTM">
    <text evidence="2">Contains 8 disulfide bonds.</text>
</comment>
<comment type="similarity">
    <text evidence="3">Belongs to the CRISP family.</text>
</comment>
<reference evidence="3" key="1">
    <citation type="submission" date="1999-08" db="UniProtKB">
        <authorList>
            <person name="Kini M.R."/>
        </authorList>
    </citation>
    <scope>PROTEIN SEQUENCE</scope>
    <source>
        <tissue evidence="3">Venom</tissue>
    </source>
</reference>
<keyword id="KW-0108">Calcium channel impairing toxin</keyword>
<keyword id="KW-0903">Direct protein sequencing</keyword>
<keyword id="KW-1015">Disulfide bond</keyword>
<keyword id="KW-0872">Ion channel impairing toxin</keyword>
<keyword id="KW-0528">Neurotoxin</keyword>
<keyword id="KW-0964">Secreted</keyword>
<keyword id="KW-0800">Toxin</keyword>
<accession>P81991</accession>
<organism evidence="3">
    <name type="scientific">Austrelaps superbus</name>
    <name type="common">Lowland copperhead snake</name>
    <name type="synonym">Hoplocephalus superbus</name>
    <dbReference type="NCBI Taxonomy" id="29156"/>
    <lineage>
        <taxon>Eukaryota</taxon>
        <taxon>Metazoa</taxon>
        <taxon>Chordata</taxon>
        <taxon>Craniata</taxon>
        <taxon>Vertebrata</taxon>
        <taxon>Euteleostomi</taxon>
        <taxon>Lepidosauria</taxon>
        <taxon>Squamata</taxon>
        <taxon>Bifurcata</taxon>
        <taxon>Unidentata</taxon>
        <taxon>Episquamata</taxon>
        <taxon>Toxicofera</taxon>
        <taxon>Serpentes</taxon>
        <taxon>Colubroidea</taxon>
        <taxon>Elapidae</taxon>
        <taxon>Hydrophiinae</taxon>
        <taxon>Austrelaps</taxon>
    </lineage>
</organism>
<proteinExistence type="evidence at protein level"/>
<dbReference type="GO" id="GO:0005576">
    <property type="term" value="C:extracellular region"/>
    <property type="evidence" value="ECO:0007669"/>
    <property type="project" value="UniProtKB-SubCell"/>
</dbReference>
<dbReference type="GO" id="GO:0005246">
    <property type="term" value="F:calcium channel regulator activity"/>
    <property type="evidence" value="ECO:0007669"/>
    <property type="project" value="UniProtKB-KW"/>
</dbReference>
<dbReference type="GO" id="GO:0090729">
    <property type="term" value="F:toxin activity"/>
    <property type="evidence" value="ECO:0007669"/>
    <property type="project" value="UniProtKB-KW"/>
</dbReference>
<dbReference type="Gene3D" id="3.40.33.10">
    <property type="entry name" value="CAP"/>
    <property type="match status" value="1"/>
</dbReference>
<dbReference type="InterPro" id="IPR035940">
    <property type="entry name" value="CAP_sf"/>
</dbReference>
<dbReference type="SUPFAM" id="SSF55797">
    <property type="entry name" value="PR-1-like"/>
    <property type="match status" value="1"/>
</dbReference>
<name>CRVP1_AUSSU</name>